<feature type="chain" id="PRO_0000101369" description="Uncharacterized protein RP434">
    <location>
        <begin position="1"/>
        <end position="212"/>
    </location>
</feature>
<name>Y434_RICPR</name>
<sequence length="212" mass="24749">MSPQIIELLIFAIIAFYIINKLITTLGSTSEEEQIKNKSYFGEPVIKDVTYSTVKDHKKVERNVSRTQDIKVFKDIIVENNINAVVDGIEQIHKRLYSFDPVKFINNAKTAFQMIIEAAYKKDVKELSELIDKRYLEEFEKIIPSYGDFFDSSALSAKYSEIYMFGNNIFIKLLFQGKNVVDKIEDLQEEWTFTRNANTKEVDWFLSNIERV</sequence>
<organism>
    <name type="scientific">Rickettsia prowazekii (strain Madrid E)</name>
    <dbReference type="NCBI Taxonomy" id="272947"/>
    <lineage>
        <taxon>Bacteria</taxon>
        <taxon>Pseudomonadati</taxon>
        <taxon>Pseudomonadota</taxon>
        <taxon>Alphaproteobacteria</taxon>
        <taxon>Rickettsiales</taxon>
        <taxon>Rickettsiaceae</taxon>
        <taxon>Rickettsieae</taxon>
        <taxon>Rickettsia</taxon>
        <taxon>typhus group</taxon>
    </lineage>
</organism>
<protein>
    <recommendedName>
        <fullName>Uncharacterized protein RP434</fullName>
    </recommendedName>
</protein>
<dbReference type="EMBL" id="Y11777">
    <property type="protein sequence ID" value="CAA72444.1"/>
    <property type="molecule type" value="Genomic_DNA"/>
</dbReference>
<dbReference type="EMBL" id="AJ235271">
    <property type="protein sequence ID" value="CAA14891.1"/>
    <property type="molecule type" value="Genomic_DNA"/>
</dbReference>
<dbReference type="PIR" id="A71702">
    <property type="entry name" value="A71702"/>
</dbReference>
<dbReference type="RefSeq" id="NP_220815.1">
    <property type="nucleotide sequence ID" value="NC_000963.1"/>
</dbReference>
<dbReference type="RefSeq" id="WP_004599471.1">
    <property type="nucleotide sequence ID" value="NC_000963.1"/>
</dbReference>
<dbReference type="SMR" id="O05965"/>
<dbReference type="STRING" id="272947.gene:17555514"/>
<dbReference type="EnsemblBacteria" id="CAA14891">
    <property type="protein sequence ID" value="CAA14891"/>
    <property type="gene ID" value="CAA14891"/>
</dbReference>
<dbReference type="KEGG" id="rpr:RP434"/>
<dbReference type="PATRIC" id="fig|272947.5.peg.447"/>
<dbReference type="eggNOG" id="COG4395">
    <property type="taxonomic scope" value="Bacteria"/>
</dbReference>
<dbReference type="HOGENOM" id="CLU_1304099_0_0_5"/>
<dbReference type="OrthoDB" id="7160190at2"/>
<dbReference type="Proteomes" id="UP000002480">
    <property type="component" value="Chromosome"/>
</dbReference>
<dbReference type="Gene3D" id="3.10.450.240">
    <property type="match status" value="1"/>
</dbReference>
<dbReference type="InterPro" id="IPR032710">
    <property type="entry name" value="NTF2-like_dom_sf"/>
</dbReference>
<dbReference type="InterPro" id="IPR007379">
    <property type="entry name" value="Tim44-like_dom"/>
</dbReference>
<dbReference type="NCBIfam" id="NF033779">
    <property type="entry name" value="Tim44_TimA_adap"/>
    <property type="match status" value="1"/>
</dbReference>
<dbReference type="Pfam" id="PF04280">
    <property type="entry name" value="Tim44"/>
    <property type="match status" value="1"/>
</dbReference>
<dbReference type="SMART" id="SM00978">
    <property type="entry name" value="Tim44"/>
    <property type="match status" value="1"/>
</dbReference>
<dbReference type="SUPFAM" id="SSF54427">
    <property type="entry name" value="NTF2-like"/>
    <property type="match status" value="1"/>
</dbReference>
<reference key="1">
    <citation type="journal article" date="1997" name="Microbiology">
        <title>Genomic rearrangements during evolution of the obligate intracellular parasite Rickettsia prowazekii as inferred from an analysis of 52015 bp nucleotide sequence.</title>
        <authorList>
            <person name="Andersson J.O."/>
            <person name="Andersson S.G.E."/>
        </authorList>
    </citation>
    <scope>NUCLEOTIDE SEQUENCE [GENOMIC DNA]</scope>
    <source>
        <strain>Madrid E</strain>
    </source>
</reference>
<reference key="2">
    <citation type="journal article" date="1998" name="Nature">
        <title>The genome sequence of Rickettsia prowazekii and the origin of mitochondria.</title>
        <authorList>
            <person name="Andersson S.G.E."/>
            <person name="Zomorodipour A."/>
            <person name="Andersson J.O."/>
            <person name="Sicheritz-Ponten T."/>
            <person name="Alsmark U.C.M."/>
            <person name="Podowski R.M."/>
            <person name="Naeslund A.K."/>
            <person name="Eriksson A.-S."/>
            <person name="Winkler H.H."/>
            <person name="Kurland C.G."/>
        </authorList>
    </citation>
    <scope>NUCLEOTIDE SEQUENCE [LARGE SCALE GENOMIC DNA]</scope>
    <source>
        <strain>Madrid E</strain>
    </source>
</reference>
<keyword id="KW-1185">Reference proteome</keyword>
<accession>O05965</accession>
<gene>
    <name type="ordered locus">RP434</name>
</gene>
<proteinExistence type="predicted"/>